<gene>
    <name evidence="1" type="primary">trpB</name>
    <name type="ordered locus">BF2672</name>
</gene>
<protein>
    <recommendedName>
        <fullName evidence="1">Tryptophan synthase beta chain</fullName>
        <ecNumber evidence="1">4.2.1.20</ecNumber>
    </recommendedName>
</protein>
<comment type="function">
    <text evidence="1">The beta subunit is responsible for the synthesis of L-tryptophan from indole and L-serine.</text>
</comment>
<comment type="catalytic activity">
    <reaction evidence="1">
        <text>(1S,2R)-1-C-(indol-3-yl)glycerol 3-phosphate + L-serine = D-glyceraldehyde 3-phosphate + L-tryptophan + H2O</text>
        <dbReference type="Rhea" id="RHEA:10532"/>
        <dbReference type="ChEBI" id="CHEBI:15377"/>
        <dbReference type="ChEBI" id="CHEBI:33384"/>
        <dbReference type="ChEBI" id="CHEBI:57912"/>
        <dbReference type="ChEBI" id="CHEBI:58866"/>
        <dbReference type="ChEBI" id="CHEBI:59776"/>
        <dbReference type="EC" id="4.2.1.20"/>
    </reaction>
</comment>
<comment type="cofactor">
    <cofactor evidence="1">
        <name>pyridoxal 5'-phosphate</name>
        <dbReference type="ChEBI" id="CHEBI:597326"/>
    </cofactor>
</comment>
<comment type="pathway">
    <text evidence="1">Amino-acid biosynthesis; L-tryptophan biosynthesis; L-tryptophan from chorismate: step 5/5.</text>
</comment>
<comment type="subunit">
    <text evidence="1">Tetramer of two alpha and two beta chains.</text>
</comment>
<comment type="similarity">
    <text evidence="1">Belongs to the TrpB family.</text>
</comment>
<feature type="chain" id="PRO_1000095775" description="Tryptophan synthase beta chain">
    <location>
        <begin position="1"/>
        <end position="390"/>
    </location>
</feature>
<feature type="modified residue" description="N6-(pyridoxal phosphate)lysine" evidence="1">
    <location>
        <position position="90"/>
    </location>
</feature>
<sequence>MKSFLVDQDGYYGEFGGAYVPEILHKCVEELQNTYLDVIESEDFKKEFDQLLRDYVGRPSPLYPARRLSEKYGCKMYLKREDLNHTGAHKINNTIGQILLARRMGKKRIIAETGAGQHGVATATVCALMNMECIVYMGKTDVERQHINVEKMKMLGATVVPVTSGNMTLKDATNEAIRDWCCHPSDTYYIIGSTVGPHPYPDMVARLQSVISEEIKKQLQEKEGRDYPDYLIACVGGGSNAAGTIYHYIDDERVRIVLAEAGGKGIETGMTAATIQLGKMGIIHGARTFVIQNEDGQIEEPYSISAGLDYPGIGPMHANLADKKRAMVLAVNDDEAIRAAYELTRLEGIIPALESAHALGALEKITFKPEDVVVLTVSGRGDKDIETYLG</sequence>
<proteinExistence type="inferred from homology"/>
<name>TRPB_BACFN</name>
<keyword id="KW-0028">Amino-acid biosynthesis</keyword>
<keyword id="KW-0057">Aromatic amino acid biosynthesis</keyword>
<keyword id="KW-0456">Lyase</keyword>
<keyword id="KW-0663">Pyridoxal phosphate</keyword>
<keyword id="KW-0822">Tryptophan biosynthesis</keyword>
<reference key="1">
    <citation type="journal article" date="2005" name="Science">
        <title>Extensive DNA inversions in the B. fragilis genome control variable gene expression.</title>
        <authorList>
            <person name="Cerdeno-Tarraga A.-M."/>
            <person name="Patrick S."/>
            <person name="Crossman L.C."/>
            <person name="Blakely G."/>
            <person name="Abratt V."/>
            <person name="Lennard N."/>
            <person name="Poxton I."/>
            <person name="Duerden B."/>
            <person name="Harris B."/>
            <person name="Quail M.A."/>
            <person name="Barron A."/>
            <person name="Clark L."/>
            <person name="Corton C."/>
            <person name="Doggett J."/>
            <person name="Holden M.T.G."/>
            <person name="Larke N."/>
            <person name="Line A."/>
            <person name="Lord A."/>
            <person name="Norbertczak H."/>
            <person name="Ormond D."/>
            <person name="Price C."/>
            <person name="Rabbinowitsch E."/>
            <person name="Woodward J."/>
            <person name="Barrell B.G."/>
            <person name="Parkhill J."/>
        </authorList>
    </citation>
    <scope>NUCLEOTIDE SEQUENCE [LARGE SCALE GENOMIC DNA]</scope>
    <source>
        <strain>ATCC 25285 / DSM 2151 / CCUG 4856 / JCM 11019 / LMG 10263 / NCTC 9343 / Onslow / VPI 2553 / EN-2</strain>
    </source>
</reference>
<evidence type="ECO:0000255" key="1">
    <source>
        <dbReference type="HAMAP-Rule" id="MF_00133"/>
    </source>
</evidence>
<organism>
    <name type="scientific">Bacteroides fragilis (strain ATCC 25285 / DSM 2151 / CCUG 4856 / JCM 11019 / LMG 10263 / NCTC 9343 / Onslow / VPI 2553 / EN-2)</name>
    <dbReference type="NCBI Taxonomy" id="272559"/>
    <lineage>
        <taxon>Bacteria</taxon>
        <taxon>Pseudomonadati</taxon>
        <taxon>Bacteroidota</taxon>
        <taxon>Bacteroidia</taxon>
        <taxon>Bacteroidales</taxon>
        <taxon>Bacteroidaceae</taxon>
        <taxon>Bacteroides</taxon>
    </lineage>
</organism>
<accession>Q5LBZ8</accession>
<dbReference type="EC" id="4.2.1.20" evidence="1"/>
<dbReference type="EMBL" id="CR626927">
    <property type="protein sequence ID" value="CAH08370.1"/>
    <property type="molecule type" value="Genomic_DNA"/>
</dbReference>
<dbReference type="RefSeq" id="WP_005788278.1">
    <property type="nucleotide sequence ID" value="NZ_UFTH01000002.1"/>
</dbReference>
<dbReference type="SMR" id="Q5LBZ8"/>
<dbReference type="PaxDb" id="272559-BF9343_2589"/>
<dbReference type="GeneID" id="60366390"/>
<dbReference type="KEGG" id="bfs:BF9343_2589"/>
<dbReference type="eggNOG" id="COG0133">
    <property type="taxonomic scope" value="Bacteria"/>
</dbReference>
<dbReference type="HOGENOM" id="CLU_016734_3_1_10"/>
<dbReference type="UniPathway" id="UPA00035">
    <property type="reaction ID" value="UER00044"/>
</dbReference>
<dbReference type="Proteomes" id="UP000006731">
    <property type="component" value="Chromosome"/>
</dbReference>
<dbReference type="GO" id="GO:0005737">
    <property type="term" value="C:cytoplasm"/>
    <property type="evidence" value="ECO:0007669"/>
    <property type="project" value="TreeGrafter"/>
</dbReference>
<dbReference type="GO" id="GO:0004834">
    <property type="term" value="F:tryptophan synthase activity"/>
    <property type="evidence" value="ECO:0007669"/>
    <property type="project" value="UniProtKB-UniRule"/>
</dbReference>
<dbReference type="CDD" id="cd06446">
    <property type="entry name" value="Trp-synth_B"/>
    <property type="match status" value="1"/>
</dbReference>
<dbReference type="FunFam" id="3.40.50.1100:FF:000004">
    <property type="entry name" value="Tryptophan synthase beta chain"/>
    <property type="match status" value="1"/>
</dbReference>
<dbReference type="Gene3D" id="3.40.50.1100">
    <property type="match status" value="2"/>
</dbReference>
<dbReference type="HAMAP" id="MF_00133">
    <property type="entry name" value="Trp_synth_beta"/>
    <property type="match status" value="1"/>
</dbReference>
<dbReference type="InterPro" id="IPR006653">
    <property type="entry name" value="Trp_synth_b_CS"/>
</dbReference>
<dbReference type="InterPro" id="IPR006654">
    <property type="entry name" value="Trp_synth_beta"/>
</dbReference>
<dbReference type="InterPro" id="IPR023026">
    <property type="entry name" value="Trp_synth_beta/beta-like"/>
</dbReference>
<dbReference type="InterPro" id="IPR001926">
    <property type="entry name" value="TrpB-like_PALP"/>
</dbReference>
<dbReference type="InterPro" id="IPR036052">
    <property type="entry name" value="TrpB-like_PALP_sf"/>
</dbReference>
<dbReference type="NCBIfam" id="TIGR00263">
    <property type="entry name" value="trpB"/>
    <property type="match status" value="1"/>
</dbReference>
<dbReference type="PANTHER" id="PTHR48077:SF3">
    <property type="entry name" value="TRYPTOPHAN SYNTHASE"/>
    <property type="match status" value="1"/>
</dbReference>
<dbReference type="PANTHER" id="PTHR48077">
    <property type="entry name" value="TRYPTOPHAN SYNTHASE-RELATED"/>
    <property type="match status" value="1"/>
</dbReference>
<dbReference type="Pfam" id="PF00291">
    <property type="entry name" value="PALP"/>
    <property type="match status" value="1"/>
</dbReference>
<dbReference type="PIRSF" id="PIRSF001413">
    <property type="entry name" value="Trp_syn_beta"/>
    <property type="match status" value="1"/>
</dbReference>
<dbReference type="SUPFAM" id="SSF53686">
    <property type="entry name" value="Tryptophan synthase beta subunit-like PLP-dependent enzymes"/>
    <property type="match status" value="1"/>
</dbReference>
<dbReference type="PROSITE" id="PS00168">
    <property type="entry name" value="TRP_SYNTHASE_BETA"/>
    <property type="match status" value="1"/>
</dbReference>